<reference key="1">
    <citation type="journal article" date="2009" name="Science">
        <title>The dynamics and time scale of ongoing genomic erosion in symbiotic bacteria.</title>
        <authorList>
            <person name="Moran N.A."/>
            <person name="McLaughlin H.J."/>
            <person name="Sorek R."/>
        </authorList>
    </citation>
    <scope>NUCLEOTIDE SEQUENCE [LARGE SCALE GENOMIC DNA]</scope>
    <source>
        <strain>5A</strain>
    </source>
</reference>
<name>HSCA_BUCA5</name>
<comment type="function">
    <text evidence="1">Chaperone involved in the maturation of iron-sulfur cluster-containing proteins. Has a low intrinsic ATPase activity which is markedly stimulated by HscB. Involved in the maturation of IscU.</text>
</comment>
<comment type="similarity">
    <text evidence="1">Belongs to the heat shock protein 70 family.</text>
</comment>
<proteinExistence type="inferred from homology"/>
<organism>
    <name type="scientific">Buchnera aphidicola subsp. Acyrthosiphon pisum (strain 5A)</name>
    <dbReference type="NCBI Taxonomy" id="563178"/>
    <lineage>
        <taxon>Bacteria</taxon>
        <taxon>Pseudomonadati</taxon>
        <taxon>Pseudomonadota</taxon>
        <taxon>Gammaproteobacteria</taxon>
        <taxon>Enterobacterales</taxon>
        <taxon>Erwiniaceae</taxon>
        <taxon>Buchnera</taxon>
    </lineage>
</organism>
<sequence length="611" mass="69837">MIFFKKKHDKKLLLGIDLGTTYSLAATVREKSVILLLDKKKRYLLPSVVHYKKNKISVGWKALENITEDPTNTISSVKRLLGRSINFVKKKFPILPYLIEKDIHEGIFFRTNFGNITPIDVSSHILKKLKKRAVLLFNQEIDASVITVPAYFNDFQKKETKKAAVLSGINLIRLLNEPTAAAVAYGLQKLKKGIVLVYDLGGGTFDVSILNLNKGIFEVLATSGDSNLGGDDFDDALAKNIYKKSNLQNRCNDFFQTSLLQIAKSTKLKLTKYEKVEVHFFDWKGYITREEFNLIIIDFIKKTLFICSDLLEEINLSVEQIKEVIMVGGSTRIPLVHTEVSKFFKKDLLKSINPDQVVAIGAAMHVDMLFSSKNNTKNKVILLDVMPLSLGIEVMGGFVEKIIFRNTSLPISKTKEFTTYKDNQTSILIHIVQGERELVKDCISLSRFVLRDIKPQKAGLVRILVTFQVDTDGLIHVKILENYSSKEKKIIIDNNITLKNLNISQILKDSLKHSKDDYYFRVKEEKKIECVRTLEILNKSLKKHLKLISKKELKKIKYTQEKLQKSIQEDDYFSMKNNLQKLDEVSKNFFSLQLKNAIDCSSIKNILKENI</sequence>
<gene>
    <name evidence="1" type="primary">hscA</name>
    <name type="ordered locus">BUAP5A_597</name>
</gene>
<dbReference type="EMBL" id="CP001161">
    <property type="protein sequence ID" value="ACL30938.1"/>
    <property type="molecule type" value="Genomic_DNA"/>
</dbReference>
<dbReference type="RefSeq" id="WP_009874552.1">
    <property type="nucleotide sequence ID" value="NC_011833.1"/>
</dbReference>
<dbReference type="SMR" id="B8D8G2"/>
<dbReference type="KEGG" id="bap:BUAP5A_597"/>
<dbReference type="HOGENOM" id="CLU_005965_2_4_6"/>
<dbReference type="OrthoDB" id="9766019at2"/>
<dbReference type="Proteomes" id="UP000006904">
    <property type="component" value="Chromosome"/>
</dbReference>
<dbReference type="GO" id="GO:0005524">
    <property type="term" value="F:ATP binding"/>
    <property type="evidence" value="ECO:0007669"/>
    <property type="project" value="UniProtKB-KW"/>
</dbReference>
<dbReference type="GO" id="GO:0016887">
    <property type="term" value="F:ATP hydrolysis activity"/>
    <property type="evidence" value="ECO:0007669"/>
    <property type="project" value="UniProtKB-UniRule"/>
</dbReference>
<dbReference type="GO" id="GO:0140662">
    <property type="term" value="F:ATP-dependent protein folding chaperone"/>
    <property type="evidence" value="ECO:0007669"/>
    <property type="project" value="InterPro"/>
</dbReference>
<dbReference type="GO" id="GO:0051082">
    <property type="term" value="F:unfolded protein binding"/>
    <property type="evidence" value="ECO:0007669"/>
    <property type="project" value="InterPro"/>
</dbReference>
<dbReference type="GO" id="GO:0016226">
    <property type="term" value="P:iron-sulfur cluster assembly"/>
    <property type="evidence" value="ECO:0007669"/>
    <property type="project" value="InterPro"/>
</dbReference>
<dbReference type="CDD" id="cd10236">
    <property type="entry name" value="ASKHA_NBD_HSP70_HscA"/>
    <property type="match status" value="1"/>
</dbReference>
<dbReference type="Gene3D" id="1.20.1270.10">
    <property type="match status" value="1"/>
</dbReference>
<dbReference type="Gene3D" id="3.30.30.30">
    <property type="match status" value="1"/>
</dbReference>
<dbReference type="Gene3D" id="3.30.420.40">
    <property type="match status" value="2"/>
</dbReference>
<dbReference type="Gene3D" id="3.90.640.10">
    <property type="entry name" value="Actin, Chain A, domain 4"/>
    <property type="match status" value="1"/>
</dbReference>
<dbReference type="Gene3D" id="2.60.34.10">
    <property type="entry name" value="Substrate Binding Domain Of DNAk, Chain A, domain 1"/>
    <property type="match status" value="1"/>
</dbReference>
<dbReference type="HAMAP" id="MF_00679">
    <property type="entry name" value="HscA"/>
    <property type="match status" value="1"/>
</dbReference>
<dbReference type="InterPro" id="IPR043129">
    <property type="entry name" value="ATPase_NBD"/>
</dbReference>
<dbReference type="InterPro" id="IPR018181">
    <property type="entry name" value="Heat_shock_70_CS"/>
</dbReference>
<dbReference type="InterPro" id="IPR042039">
    <property type="entry name" value="HscA_NBD"/>
</dbReference>
<dbReference type="InterPro" id="IPR029048">
    <property type="entry name" value="HSP70_C_sf"/>
</dbReference>
<dbReference type="InterPro" id="IPR029047">
    <property type="entry name" value="HSP70_peptide-bd_sf"/>
</dbReference>
<dbReference type="InterPro" id="IPR013126">
    <property type="entry name" value="Hsp_70_fam"/>
</dbReference>
<dbReference type="InterPro" id="IPR010236">
    <property type="entry name" value="ISC_FeS_clus_asmbl_HscA"/>
</dbReference>
<dbReference type="NCBIfam" id="TIGR01991">
    <property type="entry name" value="HscA"/>
    <property type="match status" value="1"/>
</dbReference>
<dbReference type="NCBIfam" id="NF003520">
    <property type="entry name" value="PRK05183.1"/>
    <property type="match status" value="1"/>
</dbReference>
<dbReference type="PANTHER" id="PTHR19375">
    <property type="entry name" value="HEAT SHOCK PROTEIN 70KDA"/>
    <property type="match status" value="1"/>
</dbReference>
<dbReference type="Pfam" id="PF00012">
    <property type="entry name" value="HSP70"/>
    <property type="match status" value="1"/>
</dbReference>
<dbReference type="PRINTS" id="PR00301">
    <property type="entry name" value="HEATSHOCK70"/>
</dbReference>
<dbReference type="SUPFAM" id="SSF53067">
    <property type="entry name" value="Actin-like ATPase domain"/>
    <property type="match status" value="2"/>
</dbReference>
<dbReference type="SUPFAM" id="SSF100934">
    <property type="entry name" value="Heat shock protein 70kD (HSP70), C-terminal subdomain"/>
    <property type="match status" value="1"/>
</dbReference>
<dbReference type="SUPFAM" id="SSF100920">
    <property type="entry name" value="Heat shock protein 70kD (HSP70), peptide-binding domain"/>
    <property type="match status" value="1"/>
</dbReference>
<dbReference type="PROSITE" id="PS00297">
    <property type="entry name" value="HSP70_1"/>
    <property type="match status" value="1"/>
</dbReference>
<dbReference type="PROSITE" id="PS00329">
    <property type="entry name" value="HSP70_2"/>
    <property type="match status" value="1"/>
</dbReference>
<dbReference type="PROSITE" id="PS01036">
    <property type="entry name" value="HSP70_3"/>
    <property type="match status" value="1"/>
</dbReference>
<accession>B8D8G2</accession>
<keyword id="KW-0067">ATP-binding</keyword>
<keyword id="KW-0143">Chaperone</keyword>
<keyword id="KW-0547">Nucleotide-binding</keyword>
<keyword id="KW-0346">Stress response</keyword>
<protein>
    <recommendedName>
        <fullName evidence="1">Chaperone protein HscA</fullName>
    </recommendedName>
    <alternativeName>
        <fullName evidence="1">Hsc66</fullName>
    </alternativeName>
</protein>
<feature type="chain" id="PRO_1000147711" description="Chaperone protein HscA">
    <location>
        <begin position="1"/>
        <end position="611"/>
    </location>
</feature>
<evidence type="ECO:0000255" key="1">
    <source>
        <dbReference type="HAMAP-Rule" id="MF_00679"/>
    </source>
</evidence>